<protein>
    <recommendedName>
        <fullName evidence="1">Der GTPase-activating protein YihI</fullName>
    </recommendedName>
</protein>
<organism>
    <name type="scientific">Escherichia coli (strain 55989 / EAEC)</name>
    <dbReference type="NCBI Taxonomy" id="585055"/>
    <lineage>
        <taxon>Bacteria</taxon>
        <taxon>Pseudomonadati</taxon>
        <taxon>Pseudomonadota</taxon>
        <taxon>Gammaproteobacteria</taxon>
        <taxon>Enterobacterales</taxon>
        <taxon>Enterobacteriaceae</taxon>
        <taxon>Escherichia</taxon>
    </lineage>
</organism>
<proteinExistence type="inferred from homology"/>
<evidence type="ECO:0000255" key="1">
    <source>
        <dbReference type="HAMAP-Rule" id="MF_01058"/>
    </source>
</evidence>
<evidence type="ECO:0000256" key="2">
    <source>
        <dbReference type="SAM" id="MobiDB-lite"/>
    </source>
</evidence>
<name>YIHI_ECO55</name>
<comment type="function">
    <text evidence="1">A GTPase-activating protein (GAP) that modifies Der/EngA GTPase function. May play a role in ribosome biogenesis.</text>
</comment>
<comment type="subunit">
    <text evidence="1">Interacts with Der.</text>
</comment>
<comment type="similarity">
    <text evidence="1">Belongs to the YihI family.</text>
</comment>
<gene>
    <name evidence="1" type="primary">yihI</name>
    <name type="ordered locus">EC55989_4341</name>
</gene>
<reference key="1">
    <citation type="journal article" date="2009" name="PLoS Genet.">
        <title>Organised genome dynamics in the Escherichia coli species results in highly diverse adaptive paths.</title>
        <authorList>
            <person name="Touchon M."/>
            <person name="Hoede C."/>
            <person name="Tenaillon O."/>
            <person name="Barbe V."/>
            <person name="Baeriswyl S."/>
            <person name="Bidet P."/>
            <person name="Bingen E."/>
            <person name="Bonacorsi S."/>
            <person name="Bouchier C."/>
            <person name="Bouvet O."/>
            <person name="Calteau A."/>
            <person name="Chiapello H."/>
            <person name="Clermont O."/>
            <person name="Cruveiller S."/>
            <person name="Danchin A."/>
            <person name="Diard M."/>
            <person name="Dossat C."/>
            <person name="Karoui M.E."/>
            <person name="Frapy E."/>
            <person name="Garry L."/>
            <person name="Ghigo J.M."/>
            <person name="Gilles A.M."/>
            <person name="Johnson J."/>
            <person name="Le Bouguenec C."/>
            <person name="Lescat M."/>
            <person name="Mangenot S."/>
            <person name="Martinez-Jehanne V."/>
            <person name="Matic I."/>
            <person name="Nassif X."/>
            <person name="Oztas S."/>
            <person name="Petit M.A."/>
            <person name="Pichon C."/>
            <person name="Rouy Z."/>
            <person name="Ruf C.S."/>
            <person name="Schneider D."/>
            <person name="Tourret J."/>
            <person name="Vacherie B."/>
            <person name="Vallenet D."/>
            <person name="Medigue C."/>
            <person name="Rocha E.P.C."/>
            <person name="Denamur E."/>
        </authorList>
    </citation>
    <scope>NUCLEOTIDE SEQUENCE [LARGE SCALE GENOMIC DNA]</scope>
    <source>
        <strain>55989 / EAEC</strain>
    </source>
</reference>
<dbReference type="EMBL" id="CU928145">
    <property type="protein sequence ID" value="CAV01022.1"/>
    <property type="molecule type" value="Genomic_DNA"/>
</dbReference>
<dbReference type="RefSeq" id="WP_001350037.1">
    <property type="nucleotide sequence ID" value="NC_011748.1"/>
</dbReference>
<dbReference type="SMR" id="B7L9B9"/>
<dbReference type="KEGG" id="eck:EC55989_4341"/>
<dbReference type="HOGENOM" id="CLU_094104_2_0_6"/>
<dbReference type="Proteomes" id="UP000000746">
    <property type="component" value="Chromosome"/>
</dbReference>
<dbReference type="GO" id="GO:0005096">
    <property type="term" value="F:GTPase activator activity"/>
    <property type="evidence" value="ECO:0007669"/>
    <property type="project" value="UniProtKB-KW"/>
</dbReference>
<dbReference type="GO" id="GO:0042254">
    <property type="term" value="P:ribosome biogenesis"/>
    <property type="evidence" value="ECO:0007669"/>
    <property type="project" value="UniProtKB-KW"/>
</dbReference>
<dbReference type="HAMAP" id="MF_01058">
    <property type="entry name" value="GAP_YihI"/>
    <property type="match status" value="1"/>
</dbReference>
<dbReference type="InterPro" id="IPR007336">
    <property type="entry name" value="YihI"/>
</dbReference>
<dbReference type="NCBIfam" id="NF003560">
    <property type="entry name" value="PRK05244.1-1"/>
    <property type="match status" value="1"/>
</dbReference>
<dbReference type="Pfam" id="PF04220">
    <property type="entry name" value="YihI"/>
    <property type="match status" value="1"/>
</dbReference>
<feature type="chain" id="PRO_1000149674" description="Der GTPase-activating protein YihI">
    <location>
        <begin position="1"/>
        <end position="169"/>
    </location>
</feature>
<feature type="region of interest" description="Disordered" evidence="2">
    <location>
        <begin position="1"/>
        <end position="75"/>
    </location>
</feature>
<feature type="region of interest" description="Disordered" evidence="2">
    <location>
        <begin position="144"/>
        <end position="169"/>
    </location>
</feature>
<feature type="compositionally biased region" description="Basic residues" evidence="2">
    <location>
        <begin position="10"/>
        <end position="19"/>
    </location>
</feature>
<feature type="compositionally biased region" description="Basic and acidic residues" evidence="2">
    <location>
        <begin position="20"/>
        <end position="30"/>
    </location>
</feature>
<feature type="compositionally biased region" description="Basic residues" evidence="2">
    <location>
        <begin position="31"/>
        <end position="40"/>
    </location>
</feature>
<feature type="compositionally biased region" description="Polar residues" evidence="2">
    <location>
        <begin position="49"/>
        <end position="58"/>
    </location>
</feature>
<feature type="compositionally biased region" description="Acidic residues" evidence="2">
    <location>
        <begin position="147"/>
        <end position="159"/>
    </location>
</feature>
<feature type="compositionally biased region" description="Basic and acidic residues" evidence="2">
    <location>
        <begin position="160"/>
        <end position="169"/>
    </location>
</feature>
<accession>B7L9B9</accession>
<sequence>MKPSSSNSRSKGHAKARRKTREELDQEARDRKRQKKRRGHAPGSRAAGGNTTSGSKGQNAPKDPRIGSKTPIPLGVIEKVTKQHKPKSEKPMLSPQAELELLETDERLDALLERLEAGETLSAEEQSWVDAKLDRIDELMQKLGLSYDDDEEEEEDEKQEDMMRLLRGN</sequence>
<keyword id="KW-0343">GTPase activation</keyword>
<keyword id="KW-1185">Reference proteome</keyword>
<keyword id="KW-0690">Ribosome biogenesis</keyword>